<accession>B5FS93</accession>
<comment type="function">
    <text evidence="1">Represses ulaG and the ulaABCDEF operon.</text>
</comment>
<comment type="subcellular location">
    <subcellularLocation>
        <location evidence="1">Cytoplasm</location>
    </subcellularLocation>
</comment>
<keyword id="KW-0963">Cytoplasm</keyword>
<keyword id="KW-0238">DNA-binding</keyword>
<keyword id="KW-0678">Repressor</keyword>
<keyword id="KW-0804">Transcription</keyword>
<keyword id="KW-0805">Transcription regulation</keyword>
<dbReference type="EMBL" id="CP001144">
    <property type="protein sequence ID" value="ACH76838.1"/>
    <property type="molecule type" value="Genomic_DNA"/>
</dbReference>
<dbReference type="RefSeq" id="WP_000133618.1">
    <property type="nucleotide sequence ID" value="NC_011205.1"/>
</dbReference>
<dbReference type="SMR" id="B5FS93"/>
<dbReference type="KEGG" id="sed:SeD_A4778"/>
<dbReference type="HOGENOM" id="CLU_060699_3_2_6"/>
<dbReference type="Proteomes" id="UP000008322">
    <property type="component" value="Chromosome"/>
</dbReference>
<dbReference type="GO" id="GO:0005737">
    <property type="term" value="C:cytoplasm"/>
    <property type="evidence" value="ECO:0007669"/>
    <property type="project" value="UniProtKB-SubCell"/>
</dbReference>
<dbReference type="GO" id="GO:0003677">
    <property type="term" value="F:DNA binding"/>
    <property type="evidence" value="ECO:0007669"/>
    <property type="project" value="UniProtKB-KW"/>
</dbReference>
<dbReference type="GO" id="GO:0003700">
    <property type="term" value="F:DNA-binding transcription factor activity"/>
    <property type="evidence" value="ECO:0007669"/>
    <property type="project" value="InterPro"/>
</dbReference>
<dbReference type="GO" id="GO:0045892">
    <property type="term" value="P:negative regulation of DNA-templated transcription"/>
    <property type="evidence" value="ECO:0007669"/>
    <property type="project" value="UniProtKB-UniRule"/>
</dbReference>
<dbReference type="FunFam" id="1.10.10.10:FF:000160">
    <property type="entry name" value="HTH-type transcriptional regulator UlaR"/>
    <property type="match status" value="1"/>
</dbReference>
<dbReference type="Gene3D" id="1.10.10.10">
    <property type="entry name" value="Winged helix-like DNA-binding domain superfamily/Winged helix DNA-binding domain"/>
    <property type="match status" value="1"/>
</dbReference>
<dbReference type="HAMAP" id="MF_01563">
    <property type="entry name" value="HTH_type_UlaR"/>
    <property type="match status" value="1"/>
</dbReference>
<dbReference type="InterPro" id="IPR050313">
    <property type="entry name" value="Carb_Metab_HTH_regulators"/>
</dbReference>
<dbReference type="InterPro" id="IPR014036">
    <property type="entry name" value="DeoR-like_C"/>
</dbReference>
<dbReference type="InterPro" id="IPR001034">
    <property type="entry name" value="DeoR_HTH"/>
</dbReference>
<dbReference type="InterPro" id="IPR037171">
    <property type="entry name" value="NagB/RpiA_transferase-like"/>
</dbReference>
<dbReference type="InterPro" id="IPR018356">
    <property type="entry name" value="Tscrpt_reg_HTH_DeoR_CS"/>
</dbReference>
<dbReference type="InterPro" id="IPR023711">
    <property type="entry name" value="Tscrpt_reg_HTH_UlaR"/>
</dbReference>
<dbReference type="InterPro" id="IPR036388">
    <property type="entry name" value="WH-like_DNA-bd_sf"/>
</dbReference>
<dbReference type="InterPro" id="IPR036390">
    <property type="entry name" value="WH_DNA-bd_sf"/>
</dbReference>
<dbReference type="NCBIfam" id="NF010034">
    <property type="entry name" value="PRK13509.1"/>
    <property type="match status" value="1"/>
</dbReference>
<dbReference type="PANTHER" id="PTHR30363">
    <property type="entry name" value="HTH-TYPE TRANSCRIPTIONAL REGULATOR SRLR-RELATED"/>
    <property type="match status" value="1"/>
</dbReference>
<dbReference type="PANTHER" id="PTHR30363:SF55">
    <property type="entry name" value="HTH-TYPE TRANSCRIPTIONAL REGULATOR ULAR"/>
    <property type="match status" value="1"/>
</dbReference>
<dbReference type="Pfam" id="PF00455">
    <property type="entry name" value="DeoRC"/>
    <property type="match status" value="1"/>
</dbReference>
<dbReference type="Pfam" id="PF08220">
    <property type="entry name" value="HTH_DeoR"/>
    <property type="match status" value="1"/>
</dbReference>
<dbReference type="PRINTS" id="PR00037">
    <property type="entry name" value="HTHLACR"/>
</dbReference>
<dbReference type="SMART" id="SM01134">
    <property type="entry name" value="DeoRC"/>
    <property type="match status" value="1"/>
</dbReference>
<dbReference type="SMART" id="SM00420">
    <property type="entry name" value="HTH_DEOR"/>
    <property type="match status" value="1"/>
</dbReference>
<dbReference type="SUPFAM" id="SSF100950">
    <property type="entry name" value="NagB/RpiA/CoA transferase-like"/>
    <property type="match status" value="1"/>
</dbReference>
<dbReference type="SUPFAM" id="SSF46785">
    <property type="entry name" value="Winged helix' DNA-binding domain"/>
    <property type="match status" value="1"/>
</dbReference>
<dbReference type="PROSITE" id="PS00894">
    <property type="entry name" value="HTH_DEOR_1"/>
    <property type="match status" value="1"/>
</dbReference>
<dbReference type="PROSITE" id="PS51000">
    <property type="entry name" value="HTH_DEOR_2"/>
    <property type="match status" value="1"/>
</dbReference>
<proteinExistence type="inferred from homology"/>
<name>ULAR_SALDC</name>
<reference key="1">
    <citation type="journal article" date="2011" name="J. Bacteriol.">
        <title>Comparative genomics of 28 Salmonella enterica isolates: evidence for CRISPR-mediated adaptive sublineage evolution.</title>
        <authorList>
            <person name="Fricke W.F."/>
            <person name="Mammel M.K."/>
            <person name="McDermott P.F."/>
            <person name="Tartera C."/>
            <person name="White D.G."/>
            <person name="Leclerc J.E."/>
            <person name="Ravel J."/>
            <person name="Cebula T.A."/>
        </authorList>
    </citation>
    <scope>NUCLEOTIDE SEQUENCE [LARGE SCALE GENOMIC DNA]</scope>
    <source>
        <strain>CT_02021853</strain>
    </source>
</reference>
<feature type="chain" id="PRO_1000190472" description="HTH-type transcriptional regulator UlaR">
    <location>
        <begin position="1"/>
        <end position="251"/>
    </location>
</feature>
<feature type="domain" description="HTH deoR-type" evidence="1">
    <location>
        <begin position="3"/>
        <end position="58"/>
    </location>
</feature>
<feature type="DNA-binding region" description="H-T-H motif" evidence="1">
    <location>
        <begin position="20"/>
        <end position="39"/>
    </location>
</feature>
<organism>
    <name type="scientific">Salmonella dublin (strain CT_02021853)</name>
    <dbReference type="NCBI Taxonomy" id="439851"/>
    <lineage>
        <taxon>Bacteria</taxon>
        <taxon>Pseudomonadati</taxon>
        <taxon>Pseudomonadota</taxon>
        <taxon>Gammaproteobacteria</taxon>
        <taxon>Enterobacterales</taxon>
        <taxon>Enterobacteriaceae</taxon>
        <taxon>Salmonella</taxon>
    </lineage>
</organism>
<gene>
    <name evidence="1" type="primary">ulaR</name>
    <name type="ordered locus">SeD_A4778</name>
</gene>
<evidence type="ECO:0000255" key="1">
    <source>
        <dbReference type="HAMAP-Rule" id="MF_01563"/>
    </source>
</evidence>
<protein>
    <recommendedName>
        <fullName evidence="1">HTH-type transcriptional regulator UlaR</fullName>
    </recommendedName>
</protein>
<sequence length="251" mass="27487">MTEAQRHQILLDMLAQLGFVTVENVIERLGISPATARRDINKLDESGKLKKVRNGAEAITQQRPRWTPMNLHQAQNHDEKVRIAKAASQLVNPGESVVINCGSTAFLLGREMCGKPVQIITNYLPLANYLIDQEHDSVIIMGGQYNKSQSITLSPQGSENSLYAGHWMFTSGKGLTADGLYKTDMLTAMAEQKMLSVVGKLVALVDSSKIGERAGMLFSRADQIAMLITGKNANPQVLQQLEAQGVSILRV</sequence>